<name>RL10_BORPA</name>
<gene>
    <name evidence="1" type="primary">rplJ</name>
    <name type="ordered locus">BPP0012</name>
</gene>
<protein>
    <recommendedName>
        <fullName evidence="1">Large ribosomal subunit protein uL10</fullName>
    </recommendedName>
    <alternativeName>
        <fullName evidence="2">50S ribosomal protein L10</fullName>
    </alternativeName>
</protein>
<accession>Q7W2H1</accession>
<reference key="1">
    <citation type="journal article" date="2003" name="Nat. Genet.">
        <title>Comparative analysis of the genome sequences of Bordetella pertussis, Bordetella parapertussis and Bordetella bronchiseptica.</title>
        <authorList>
            <person name="Parkhill J."/>
            <person name="Sebaihia M."/>
            <person name="Preston A."/>
            <person name="Murphy L.D."/>
            <person name="Thomson N.R."/>
            <person name="Harris D.E."/>
            <person name="Holden M.T.G."/>
            <person name="Churcher C.M."/>
            <person name="Bentley S.D."/>
            <person name="Mungall K.L."/>
            <person name="Cerdeno-Tarraga A.-M."/>
            <person name="Temple L."/>
            <person name="James K.D."/>
            <person name="Harris B."/>
            <person name="Quail M.A."/>
            <person name="Achtman M."/>
            <person name="Atkin R."/>
            <person name="Baker S."/>
            <person name="Basham D."/>
            <person name="Bason N."/>
            <person name="Cherevach I."/>
            <person name="Chillingworth T."/>
            <person name="Collins M."/>
            <person name="Cronin A."/>
            <person name="Davis P."/>
            <person name="Doggett J."/>
            <person name="Feltwell T."/>
            <person name="Goble A."/>
            <person name="Hamlin N."/>
            <person name="Hauser H."/>
            <person name="Holroyd S."/>
            <person name="Jagels K."/>
            <person name="Leather S."/>
            <person name="Moule S."/>
            <person name="Norberczak H."/>
            <person name="O'Neil S."/>
            <person name="Ormond D."/>
            <person name="Price C."/>
            <person name="Rabbinowitsch E."/>
            <person name="Rutter S."/>
            <person name="Sanders M."/>
            <person name="Saunders D."/>
            <person name="Seeger K."/>
            <person name="Sharp S."/>
            <person name="Simmonds M."/>
            <person name="Skelton J."/>
            <person name="Squares R."/>
            <person name="Squares S."/>
            <person name="Stevens K."/>
            <person name="Unwin L."/>
            <person name="Whitehead S."/>
            <person name="Barrell B.G."/>
            <person name="Maskell D.J."/>
        </authorList>
    </citation>
    <scope>NUCLEOTIDE SEQUENCE [LARGE SCALE GENOMIC DNA]</scope>
    <source>
        <strain>12822 / ATCC BAA-587 / NCTC 13253</strain>
    </source>
</reference>
<keyword id="KW-0687">Ribonucleoprotein</keyword>
<keyword id="KW-0689">Ribosomal protein</keyword>
<keyword id="KW-0694">RNA-binding</keyword>
<keyword id="KW-0699">rRNA-binding</keyword>
<evidence type="ECO:0000255" key="1">
    <source>
        <dbReference type="HAMAP-Rule" id="MF_00362"/>
    </source>
</evidence>
<evidence type="ECO:0000305" key="2"/>
<proteinExistence type="inferred from homology"/>
<sequence>MSLNRQEKAVVIEEVSAQVAKAQSIVIAEYRGLDVASVTVLRKTARESGVYLRVLKNTLVRRAVAGTAFEPLSEQLTGPLIYGISADPVAAAKVLAGFAKSNDKLVIKAGSLPNSLLTQDGVKALATMPSREELLSKLLGTMQAPIAQFVRTLNEVPTKFARGLAAVRDQKAAA</sequence>
<comment type="function">
    <text evidence="1">Forms part of the ribosomal stalk, playing a central role in the interaction of the ribosome with GTP-bound translation factors.</text>
</comment>
<comment type="subunit">
    <text evidence="1">Part of the ribosomal stalk of the 50S ribosomal subunit. The N-terminus interacts with L11 and the large rRNA to form the base of the stalk. The C-terminus forms an elongated spine to which L12 dimers bind in a sequential fashion forming a multimeric L10(L12)X complex.</text>
</comment>
<comment type="similarity">
    <text evidence="1">Belongs to the universal ribosomal protein uL10 family.</text>
</comment>
<organism>
    <name type="scientific">Bordetella parapertussis (strain 12822 / ATCC BAA-587 / NCTC 13253)</name>
    <dbReference type="NCBI Taxonomy" id="257311"/>
    <lineage>
        <taxon>Bacteria</taxon>
        <taxon>Pseudomonadati</taxon>
        <taxon>Pseudomonadota</taxon>
        <taxon>Betaproteobacteria</taxon>
        <taxon>Burkholderiales</taxon>
        <taxon>Alcaligenaceae</taxon>
        <taxon>Bordetella</taxon>
    </lineage>
</organism>
<feature type="chain" id="PRO_0000154596" description="Large ribosomal subunit protein uL10">
    <location>
        <begin position="1"/>
        <end position="174"/>
    </location>
</feature>
<dbReference type="EMBL" id="BX640423">
    <property type="protein sequence ID" value="CAE39753.1"/>
    <property type="molecule type" value="Genomic_DNA"/>
</dbReference>
<dbReference type="RefSeq" id="WP_003806888.1">
    <property type="nucleotide sequence ID" value="NC_002928.3"/>
</dbReference>
<dbReference type="SMR" id="Q7W2H1"/>
<dbReference type="GeneID" id="93206241"/>
<dbReference type="KEGG" id="bpa:BPP0012"/>
<dbReference type="HOGENOM" id="CLU_092227_0_1_4"/>
<dbReference type="Proteomes" id="UP000001421">
    <property type="component" value="Chromosome"/>
</dbReference>
<dbReference type="GO" id="GO:0015934">
    <property type="term" value="C:large ribosomal subunit"/>
    <property type="evidence" value="ECO:0007669"/>
    <property type="project" value="InterPro"/>
</dbReference>
<dbReference type="GO" id="GO:0070180">
    <property type="term" value="F:large ribosomal subunit rRNA binding"/>
    <property type="evidence" value="ECO:0007669"/>
    <property type="project" value="UniProtKB-UniRule"/>
</dbReference>
<dbReference type="GO" id="GO:0003735">
    <property type="term" value="F:structural constituent of ribosome"/>
    <property type="evidence" value="ECO:0007669"/>
    <property type="project" value="InterPro"/>
</dbReference>
<dbReference type="GO" id="GO:0006412">
    <property type="term" value="P:translation"/>
    <property type="evidence" value="ECO:0007669"/>
    <property type="project" value="UniProtKB-UniRule"/>
</dbReference>
<dbReference type="CDD" id="cd05797">
    <property type="entry name" value="Ribosomal_L10"/>
    <property type="match status" value="1"/>
</dbReference>
<dbReference type="Gene3D" id="3.30.70.1730">
    <property type="match status" value="1"/>
</dbReference>
<dbReference type="Gene3D" id="6.10.250.290">
    <property type="match status" value="1"/>
</dbReference>
<dbReference type="HAMAP" id="MF_00362">
    <property type="entry name" value="Ribosomal_uL10"/>
    <property type="match status" value="1"/>
</dbReference>
<dbReference type="InterPro" id="IPR001790">
    <property type="entry name" value="Ribosomal_uL10"/>
</dbReference>
<dbReference type="InterPro" id="IPR043141">
    <property type="entry name" value="Ribosomal_uL10-like_sf"/>
</dbReference>
<dbReference type="InterPro" id="IPR022973">
    <property type="entry name" value="Ribosomal_uL10_bac"/>
</dbReference>
<dbReference type="InterPro" id="IPR047865">
    <property type="entry name" value="Ribosomal_uL10_bac_type"/>
</dbReference>
<dbReference type="InterPro" id="IPR002363">
    <property type="entry name" value="Ribosomal_uL10_CS_bac"/>
</dbReference>
<dbReference type="NCBIfam" id="NF000955">
    <property type="entry name" value="PRK00099.1-1"/>
    <property type="match status" value="1"/>
</dbReference>
<dbReference type="PANTHER" id="PTHR11560">
    <property type="entry name" value="39S RIBOSOMAL PROTEIN L10, MITOCHONDRIAL"/>
    <property type="match status" value="1"/>
</dbReference>
<dbReference type="Pfam" id="PF00466">
    <property type="entry name" value="Ribosomal_L10"/>
    <property type="match status" value="1"/>
</dbReference>
<dbReference type="SUPFAM" id="SSF160369">
    <property type="entry name" value="Ribosomal protein L10-like"/>
    <property type="match status" value="1"/>
</dbReference>
<dbReference type="PROSITE" id="PS01109">
    <property type="entry name" value="RIBOSOMAL_L10"/>
    <property type="match status" value="1"/>
</dbReference>